<geneLocation type="plasmid" evidence="4"/>
<comment type="function">
    <text evidence="1">The Vlp and Vsp proteins are antigenically distinct proteins, only one vlp or vsp gene is transcriptionally active at any one time. Switching between these genes is a mechanism of host immune response evasion.</text>
</comment>
<comment type="subcellular location">
    <subcellularLocation>
        <location evidence="1">Cell outer membrane</location>
        <topology>Lipid-anchor</topology>
    </subcellularLocation>
</comment>
<comment type="miscellaneous">
    <text evidence="8">Genes for both Vlp and Vsp families are on (usually) unnamed linear plasmids in B.hermsii HS1.</text>
</comment>
<comment type="similarity">
    <text evidence="4">Belongs to the variable large protein (Vlp) family. Beta subfamily.</text>
</comment>
<feature type="signal peptide" evidence="3">
    <location>
        <begin position="1"/>
        <end position="18"/>
    </location>
</feature>
<feature type="chain" id="PRO_0000244503" description="Variable large protein 12" evidence="2">
    <location>
        <begin position="19"/>
        <end position="353"/>
    </location>
</feature>
<feature type="lipid moiety-binding region" description="N-palmitoyl cysteine" evidence="2 7">
    <location>
        <position position="19"/>
    </location>
</feature>
<feature type="lipid moiety-binding region" description="S-diacylglycerol cysteine" evidence="2 7">
    <location>
        <position position="19"/>
    </location>
</feature>
<dbReference type="EMBL" id="U52038">
    <property type="protein sequence ID" value="AAB17734.1"/>
    <property type="molecule type" value="Genomic_DNA"/>
</dbReference>
<dbReference type="SMR" id="P70901"/>
<dbReference type="GO" id="GO:0009279">
    <property type="term" value="C:cell outer membrane"/>
    <property type="evidence" value="ECO:0007669"/>
    <property type="project" value="UniProtKB-SubCell"/>
</dbReference>
<dbReference type="InterPro" id="IPR000680">
    <property type="entry name" value="Borrelia_lipo"/>
</dbReference>
<dbReference type="Pfam" id="PF00921">
    <property type="entry name" value="Lipoprotein_2"/>
    <property type="match status" value="1"/>
</dbReference>
<dbReference type="SUPFAM" id="SSF74748">
    <property type="entry name" value="Variable surface antigen VlsE"/>
    <property type="match status" value="1"/>
</dbReference>
<dbReference type="PROSITE" id="PS51257">
    <property type="entry name" value="PROKAR_LIPOPROTEIN"/>
    <property type="match status" value="1"/>
</dbReference>
<keyword id="KW-0998">Cell outer membrane</keyword>
<keyword id="KW-0449">Lipoprotein</keyword>
<keyword id="KW-0472">Membrane</keyword>
<keyword id="KW-0564">Palmitate</keyword>
<keyword id="KW-0614">Plasmid</keyword>
<keyword id="KW-0732">Signal</keyword>
<name>VLP12_BORHE</name>
<evidence type="ECO:0000250" key="1">
    <source>
        <dbReference type="UniProtKB" id="P21875"/>
    </source>
</evidence>
<evidence type="ECO:0000255" key="2"/>
<evidence type="ECO:0000255" key="3">
    <source>
        <dbReference type="PROSITE-ProRule" id="PRU00303"/>
    </source>
</evidence>
<evidence type="ECO:0000269" key="4">
    <source>
    </source>
</evidence>
<evidence type="ECO:0000303" key="5">
    <source>
    </source>
</evidence>
<evidence type="ECO:0000303" key="6">
    <source ref="1"/>
</evidence>
<evidence type="ECO:0000305" key="7"/>
<evidence type="ECO:0000305" key="8">
    <source>
    </source>
</evidence>
<evidence type="ECO:0000312" key="9">
    <source>
        <dbReference type="EMBL" id="AAB17734.1"/>
    </source>
</evidence>
<organism>
    <name type="scientific">Borrelia hermsii</name>
    <dbReference type="NCBI Taxonomy" id="140"/>
    <lineage>
        <taxon>Bacteria</taxon>
        <taxon>Pseudomonadati</taxon>
        <taxon>Spirochaetota</taxon>
        <taxon>Spirochaetia</taxon>
        <taxon>Spirochaetales</taxon>
        <taxon>Borreliaceae</taxon>
        <taxon>Borrelia</taxon>
    </lineage>
</organism>
<accession>P70901</accession>
<gene>
    <name evidence="5" type="primary">vlp12</name>
    <name evidence="6" type="synonym">vmp12</name>
</gene>
<protein>
    <recommendedName>
        <fullName evidence="5">Variable large protein 12</fullName>
    </recommendedName>
</protein>
<proteinExistence type="inferred from homology"/>
<reference evidence="9" key="1">
    <citation type="submission" date="1996-03" db="EMBL/GenBank/DDBJ databases">
        <authorList>
            <person name="Restrepo B.I."/>
            <person name="Carter C.J."/>
            <person name="Infante D."/>
            <person name="Barbour A.G."/>
        </authorList>
    </citation>
    <scope>NUCLEOTIDE SEQUENCE [GENOMIC DNA]</scope>
    <source>
        <strain>ATCC 35209 / HS1</strain>
    </source>
</reference>
<reference evidence="7" key="2">
    <citation type="journal article" date="1998" name="Infect. Immun.">
        <title>Population structure of the relapsing fever spirochete Borrelia hermsii as indicated by polymorphism of two multigene families that encode immunogenic outer surface lipoproteins.</title>
        <authorList>
            <person name="Hinnebusch B.J."/>
            <person name="Barbour A.G."/>
            <person name="Restrepo B.I."/>
            <person name="Schwan T.G."/>
        </authorList>
    </citation>
    <scope>NOMENCLATURE</scope>
</reference>
<sequence length="353" mass="36042">MRKRISAIIMTLFMVLASCSNQLEAEKLAAESKNTFFDSLVKIGQGFQDIFGIFGNAIGDALGFNAVKSDDKRSKVGEHFEGVGKGLKDTKIKLDELLKEVTAAPHADTTEVKSVINSASAVLTKLIDSVTKLAGAVGNTDIADGVSIANGAAAEEASVKTVIEGVKEIIDVATNSGVKIEKGNAGTAVANANGPKAIIHNAQAAAGDATKLADEVAKADPWAMIDKIKNAKTKNGIAAANDDAGQLATATNAANNNGTAATNADLAAAVALKAMAKGGKFTQPAANEDGAVKAAAASAVNKVLGILDVIIRKAVNLELGKIKEAVKGIKYSEATGEATESDTAQPITNKSSN</sequence>